<comment type="function">
    <text evidence="1">Part of the ABC transporter complex PstSACB involved in phosphate import. Responsible for energy coupling to the transport system.</text>
</comment>
<comment type="catalytic activity">
    <reaction evidence="1">
        <text>phosphate(out) + ATP + H2O = ADP + 2 phosphate(in) + H(+)</text>
        <dbReference type="Rhea" id="RHEA:24440"/>
        <dbReference type="ChEBI" id="CHEBI:15377"/>
        <dbReference type="ChEBI" id="CHEBI:15378"/>
        <dbReference type="ChEBI" id="CHEBI:30616"/>
        <dbReference type="ChEBI" id="CHEBI:43474"/>
        <dbReference type="ChEBI" id="CHEBI:456216"/>
        <dbReference type="EC" id="7.3.2.1"/>
    </reaction>
</comment>
<comment type="subunit">
    <text evidence="1">The complex is composed of two ATP-binding proteins (PstB), two transmembrane proteins (PstC and PstA) and a solute-binding protein (PstS).</text>
</comment>
<comment type="subcellular location">
    <subcellularLocation>
        <location evidence="1">Cell inner membrane</location>
        <topology evidence="1">Peripheral membrane protein</topology>
    </subcellularLocation>
</comment>
<comment type="similarity">
    <text evidence="1">Belongs to the ABC transporter superfamily. Phosphate importer (TC 3.A.1.7) family.</text>
</comment>
<reference key="1">
    <citation type="journal article" date="2004" name="Nat. Biotechnol.">
        <title>The genome sequence of the anaerobic, sulfate-reducing bacterium Desulfovibrio vulgaris Hildenborough.</title>
        <authorList>
            <person name="Heidelberg J.F."/>
            <person name="Seshadri R."/>
            <person name="Haveman S.A."/>
            <person name="Hemme C.L."/>
            <person name="Paulsen I.T."/>
            <person name="Kolonay J.F."/>
            <person name="Eisen J.A."/>
            <person name="Ward N.L."/>
            <person name="Methe B.A."/>
            <person name="Brinkac L.M."/>
            <person name="Daugherty S.C."/>
            <person name="DeBoy R.T."/>
            <person name="Dodson R.J."/>
            <person name="Durkin A.S."/>
            <person name="Madupu R."/>
            <person name="Nelson W.C."/>
            <person name="Sullivan S.A."/>
            <person name="Fouts D.E."/>
            <person name="Haft D.H."/>
            <person name="Selengut J."/>
            <person name="Peterson J.D."/>
            <person name="Davidsen T.M."/>
            <person name="Zafar N."/>
            <person name="Zhou L."/>
            <person name="Radune D."/>
            <person name="Dimitrov G."/>
            <person name="Hance M."/>
            <person name="Tran K."/>
            <person name="Khouri H.M."/>
            <person name="Gill J."/>
            <person name="Utterback T.R."/>
            <person name="Feldblyum T.V."/>
            <person name="Wall J.D."/>
            <person name="Voordouw G."/>
            <person name="Fraser C.M."/>
        </authorList>
    </citation>
    <scope>NUCLEOTIDE SEQUENCE [LARGE SCALE GENOMIC DNA]</scope>
    <source>
        <strain>ATCC 29579 / DSM 644 / CCUG 34227 / NCIMB 8303 / VKM B-1760 / Hildenborough</strain>
    </source>
</reference>
<gene>
    <name evidence="1" type="primary">pstB</name>
    <name type="ordered locus">DVU_1084</name>
</gene>
<keyword id="KW-0067">ATP-binding</keyword>
<keyword id="KW-0997">Cell inner membrane</keyword>
<keyword id="KW-1003">Cell membrane</keyword>
<keyword id="KW-0472">Membrane</keyword>
<keyword id="KW-0547">Nucleotide-binding</keyword>
<keyword id="KW-0592">Phosphate transport</keyword>
<keyword id="KW-1185">Reference proteome</keyword>
<keyword id="KW-1278">Translocase</keyword>
<keyword id="KW-0813">Transport</keyword>
<feature type="chain" id="PRO_0000092809" description="Phosphate import ATP-binding protein PstB">
    <location>
        <begin position="1"/>
        <end position="255"/>
    </location>
</feature>
<feature type="domain" description="ABC transporter" evidence="1">
    <location>
        <begin position="9"/>
        <end position="250"/>
    </location>
</feature>
<feature type="binding site" evidence="1">
    <location>
        <begin position="41"/>
        <end position="48"/>
    </location>
    <ligand>
        <name>ATP</name>
        <dbReference type="ChEBI" id="CHEBI:30616"/>
    </ligand>
</feature>
<accession>Q72D46</accession>
<name>PSTB_NITV2</name>
<organism>
    <name type="scientific">Nitratidesulfovibrio vulgaris (strain ATCC 29579 / DSM 644 / CCUG 34227 / NCIMB 8303 / VKM B-1760 / Hildenborough)</name>
    <name type="common">Desulfovibrio vulgaris</name>
    <dbReference type="NCBI Taxonomy" id="882"/>
    <lineage>
        <taxon>Bacteria</taxon>
        <taxon>Pseudomonadati</taxon>
        <taxon>Thermodesulfobacteriota</taxon>
        <taxon>Desulfovibrionia</taxon>
        <taxon>Desulfovibrionales</taxon>
        <taxon>Desulfovibrionaceae</taxon>
        <taxon>Nitratidesulfovibrio</taxon>
    </lineage>
</organism>
<protein>
    <recommendedName>
        <fullName evidence="1">Phosphate import ATP-binding protein PstB</fullName>
        <ecNumber evidence="1">7.3.2.1</ecNumber>
    </recommendedName>
    <alternativeName>
        <fullName evidence="1">ABC phosphate transporter</fullName>
    </alternativeName>
    <alternativeName>
        <fullName evidence="1">Phosphate-transporting ATPase</fullName>
    </alternativeName>
</protein>
<proteinExistence type="inferred from homology"/>
<dbReference type="EC" id="7.3.2.1" evidence="1"/>
<dbReference type="EMBL" id="AE017285">
    <property type="protein sequence ID" value="AAS95564.1"/>
    <property type="molecule type" value="Genomic_DNA"/>
</dbReference>
<dbReference type="RefSeq" id="WP_010938383.1">
    <property type="nucleotide sequence ID" value="NC_002937.3"/>
</dbReference>
<dbReference type="RefSeq" id="YP_010305.1">
    <property type="nucleotide sequence ID" value="NC_002937.3"/>
</dbReference>
<dbReference type="SMR" id="Q72D46"/>
<dbReference type="STRING" id="882.DVU_1084"/>
<dbReference type="PaxDb" id="882-DVU_1084"/>
<dbReference type="EnsemblBacteria" id="AAS95564">
    <property type="protein sequence ID" value="AAS95564"/>
    <property type="gene ID" value="DVU_1084"/>
</dbReference>
<dbReference type="KEGG" id="dvu:DVU_1084"/>
<dbReference type="PATRIC" id="fig|882.5.peg.1022"/>
<dbReference type="eggNOG" id="COG1117">
    <property type="taxonomic scope" value="Bacteria"/>
</dbReference>
<dbReference type="HOGENOM" id="CLU_000604_1_22_7"/>
<dbReference type="OrthoDB" id="9809450at2"/>
<dbReference type="PhylomeDB" id="Q72D46"/>
<dbReference type="Proteomes" id="UP000002194">
    <property type="component" value="Chromosome"/>
</dbReference>
<dbReference type="GO" id="GO:0005886">
    <property type="term" value="C:plasma membrane"/>
    <property type="evidence" value="ECO:0007669"/>
    <property type="project" value="UniProtKB-SubCell"/>
</dbReference>
<dbReference type="GO" id="GO:0005524">
    <property type="term" value="F:ATP binding"/>
    <property type="evidence" value="ECO:0007669"/>
    <property type="project" value="UniProtKB-KW"/>
</dbReference>
<dbReference type="GO" id="GO:0016887">
    <property type="term" value="F:ATP hydrolysis activity"/>
    <property type="evidence" value="ECO:0007669"/>
    <property type="project" value="InterPro"/>
</dbReference>
<dbReference type="GO" id="GO:0015415">
    <property type="term" value="F:ATPase-coupled phosphate ion transmembrane transporter activity"/>
    <property type="evidence" value="ECO:0007669"/>
    <property type="project" value="UniProtKB-EC"/>
</dbReference>
<dbReference type="GO" id="GO:0035435">
    <property type="term" value="P:phosphate ion transmembrane transport"/>
    <property type="evidence" value="ECO:0007669"/>
    <property type="project" value="InterPro"/>
</dbReference>
<dbReference type="CDD" id="cd03260">
    <property type="entry name" value="ABC_PstB_phosphate_transporter"/>
    <property type="match status" value="1"/>
</dbReference>
<dbReference type="FunFam" id="3.40.50.300:FF:000132">
    <property type="entry name" value="Phosphate import ATP-binding protein PstB"/>
    <property type="match status" value="1"/>
</dbReference>
<dbReference type="Gene3D" id="3.40.50.300">
    <property type="entry name" value="P-loop containing nucleotide triphosphate hydrolases"/>
    <property type="match status" value="1"/>
</dbReference>
<dbReference type="InterPro" id="IPR003593">
    <property type="entry name" value="AAA+_ATPase"/>
</dbReference>
<dbReference type="InterPro" id="IPR003439">
    <property type="entry name" value="ABC_transporter-like_ATP-bd"/>
</dbReference>
<dbReference type="InterPro" id="IPR017871">
    <property type="entry name" value="ABC_transporter-like_CS"/>
</dbReference>
<dbReference type="InterPro" id="IPR027417">
    <property type="entry name" value="P-loop_NTPase"/>
</dbReference>
<dbReference type="InterPro" id="IPR005670">
    <property type="entry name" value="PstB-like"/>
</dbReference>
<dbReference type="NCBIfam" id="TIGR00972">
    <property type="entry name" value="3a0107s01c2"/>
    <property type="match status" value="1"/>
</dbReference>
<dbReference type="PANTHER" id="PTHR43423">
    <property type="entry name" value="ABC TRANSPORTER I FAMILY MEMBER 17"/>
    <property type="match status" value="1"/>
</dbReference>
<dbReference type="PANTHER" id="PTHR43423:SF1">
    <property type="entry name" value="ABC TRANSPORTER I FAMILY MEMBER 17"/>
    <property type="match status" value="1"/>
</dbReference>
<dbReference type="Pfam" id="PF00005">
    <property type="entry name" value="ABC_tran"/>
    <property type="match status" value="1"/>
</dbReference>
<dbReference type="SMART" id="SM00382">
    <property type="entry name" value="AAA"/>
    <property type="match status" value="1"/>
</dbReference>
<dbReference type="SUPFAM" id="SSF52540">
    <property type="entry name" value="P-loop containing nucleoside triphosphate hydrolases"/>
    <property type="match status" value="1"/>
</dbReference>
<dbReference type="PROSITE" id="PS00211">
    <property type="entry name" value="ABC_TRANSPORTER_1"/>
    <property type="match status" value="1"/>
</dbReference>
<dbReference type="PROSITE" id="PS50893">
    <property type="entry name" value="ABC_TRANSPORTER_2"/>
    <property type="match status" value="1"/>
</dbReference>
<dbReference type="PROSITE" id="PS51238">
    <property type="entry name" value="PSTB"/>
    <property type="match status" value="1"/>
</dbReference>
<evidence type="ECO:0000255" key="1">
    <source>
        <dbReference type="HAMAP-Rule" id="MF_01702"/>
    </source>
</evidence>
<sequence>MAVTSKAKMYAQGLQFYYGDFKALHDIDLTFEQNQVTALIGPSGCGKSTFLRCLNRMNDLIPISRVEGVIALDGENIYDPKVDVVELRRRVGMVFQKPNPFPKTVFENVAYGLRVNGVKDREYLEEKVEQSLRHAALWDEVKDRLQDSALGLSGGQQQRLCIARALAVEPEVLLMDEPASALDPIATQKIEELIHILKQQYTIIIVTHSMQQAARVSDVTAFFYMGRLIETGATEIMFTRPRNKQTEDYITGRFG</sequence>